<protein>
    <recommendedName>
        <fullName>Toll-like receptor 9</fullName>
    </recommendedName>
    <cdAntigenName>CD289</cdAntigenName>
</protein>
<name>TLR9_BOVIN</name>
<accession>Q5I2M5</accession>
<gene>
    <name type="primary">TLR9</name>
</gene>
<sequence>MGPYCAPHPLSLLVQAAALAAALAEGTLPAFLPCELQPHGQVDCNWLFLKSVPHFSAGAPRANVTSLSLISNRIHHLHDSDFVHLSNLRVLNLKWNCPPAGLSPMHFPCRMTIEPNTFLAVPTLEELNLSYNGITTVPALPSSLVSLSLSHTSILVLGPTHFTGLHALRFLYMDGNCYYMNPCPRALEVAPGALLGLGNLTHLSLKYNNLTEVPRRLPPSLDTLLLSYNHIVTLAPEDLANLTALRVLDVGGNCRRCDHARNPCRECPKNFPKLHPDTFSHLSRLEGLVLKDSSLYKLEKDWFRGLGRLQVLDLSENFLYDYITKTTIFNDLTQLRRLNLSFNYHKKVSFAHLHLASSFGSLVSLEKLDMHGIFFRSLTNITLQSLTRLPKLQSLHLQLNFINQAQLSIFGAFPSLLFVDLSDNRISGAATPAAALGEVDSRVEVWRLPRGLAPGPLDAVSSKDFMPSCNLNFTLDLSRNNLVTIQQEMFTRLSRLQCLRLSHNSISQAVNGSQFVPLTSLRVLDLSHNKLDLYHGRSFTELPQLEALDLSYNSQPFSMQGVGHNLSFVAQLPSLRYLSLAHNGIHSRVSQKLSSASLRALDFSGNSLSQMWAEGDLYLCFFKGLRNLVQLDLSENHLHTLLPRHLDNLPKSLRQLRLRDNNLAFFNWSSLTVLPRLEALDLAGNQLKALSNGSLPPGIRLQKLDVSSNSIGFVIPGFFVRATRLIELNLSANALKTVDPSWFGSLAGTLKILDVSANPLHCACGAAFVDFLLERQEAVPGLSRRVTCGSPGQLQGRSIFTQDLRLCLDETLSLDCFGLSLLMVALGLAVPMLHHLCGWDLWYCFHLCLAHLPRRRRQRGEDTLLYDAVVVFDKVQSAVADWVYNELRVQLEERRGRRALRLCLEERDWLPGKTLFENLWASVYSSRKTMFVLDHTDRVSGLLRASFLLAQQRLLEDRKDVVVLVILRPAAYRSRYVRLRQRLCRQSVLLWPHQPSGQGSFWANLGIALTRDNRHFYNRNFCRGPTTAE</sequence>
<comment type="function">
    <text evidence="3 6">Key component of innate and adaptive immunity. TLRs (Toll-like receptors) control host immune response against pathogens through recognition of molecular patterns specific to microorganisms. TLR9 is a nucleotide-sensing TLR which is activated by unmethylated cytidine-phosphate-guanosine (CpG) dinucleotides. Acts via MYD88 and TRAF6, leading to NF-kappa-B activation, cytokine secretion and the inflammatory response. Upon CpG stimulation, induces B-cell proliferation, activation, survival and antibody production (By similarity).</text>
</comment>
<comment type="subunit">
    <text evidence="1 2 3">Monomer and homodimer. Exists as a monomer in the absence of unmethylated cytidine-phosphate-guanosine (CpG) ligand. Proteolytic processing of an insertion loop (Z-loop) is required for homodimerization upon binding to the unmethylated CpG ligand leading to its activation (By similarity). Interacts with MYD88 via their respective TIR domains (By similarity). Interacts with BTK (By similarity). Interacts (via transmembrane domain) with UNC93B1. Interacts with CD300LH; the interaction may promote full activation of TLR9-triggered innate responses. Interacts with CNPY3 and HSP90B1; this interaction is required for proper folding in the endoplasmic reticulum. Interacts with SMPDL3B (By similarity). Interacts with CD82; this interaction is essential for TLR9-dependent myddosome formation in response to CpG stimulation (By similarity).</text>
</comment>
<comment type="subcellular location">
    <subcellularLocation>
        <location evidence="2">Endoplasmic reticulum membrane</location>
        <topology evidence="2">Single-pass type I membrane protein</topology>
    </subcellularLocation>
    <subcellularLocation>
        <location evidence="2">Endosome</location>
    </subcellularLocation>
    <subcellularLocation>
        <location evidence="2">Lysosome</location>
    </subcellularLocation>
    <subcellularLocation>
        <location evidence="2">Cytoplasmic vesicle</location>
        <location evidence="2">Phagosome</location>
    </subcellularLocation>
    <text evidence="2">Relocalizes from endoplasmic reticulum to endosome and lysosome upon stimulation with agonist. Exit from the ER requires UNC93B1. Endolysosomal localization is required for proteolytic cleavage and subsequent activation. Intracellular localization of the active receptor may prevent from responding to self nucleic acid.</text>
</comment>
<comment type="PTM">
    <text evidence="2">Activated by proteolytic cleavage of the flexible loop between repeats LRR14 and LRR15 within the ectodomain. Cleavage requires UNC93B1. Proteolytically processed by first removing the majority of the ectodomain by either asparagine endopeptidase (AEP) or a cathepsin followed by a trimming event that is solely cathepsin mediated and required for optimal receptor signaling.</text>
</comment>
<comment type="PTM">
    <text evidence="3">Palmitoylated by ZDHHC3 in the Golgi regulates TLR9 trafficking from the Golgi to endosomes. Depalmitoylation by PPT1 controls the release of TLR9 from UNC93B1 in endosomes.</text>
</comment>
<comment type="similarity">
    <text evidence="7">Belongs to the Toll-like receptor family.</text>
</comment>
<dbReference type="EMBL" id="AY859726">
    <property type="protein sequence ID" value="AAW50954.1"/>
    <property type="molecule type" value="mRNA"/>
</dbReference>
<dbReference type="PDB" id="3WPE">
    <property type="method" value="X-ray"/>
    <property type="resolution" value="2.38 A"/>
    <property type="chains" value="A=25-815"/>
</dbReference>
<dbReference type="PDB" id="5Y3M">
    <property type="method" value="X-ray"/>
    <property type="resolution" value="2.50 A"/>
    <property type="chains" value="A/B=25-817"/>
</dbReference>
<dbReference type="PDBsum" id="3WPE"/>
<dbReference type="PDBsum" id="5Y3M"/>
<dbReference type="SMR" id="Q5I2M5"/>
<dbReference type="DIP" id="DIP-61514N"/>
<dbReference type="FunCoup" id="Q5I2M5">
    <property type="interactions" value="62"/>
</dbReference>
<dbReference type="STRING" id="9913.ENSBTAP00000024223"/>
<dbReference type="GlyCosmos" id="Q5I2M5">
    <property type="glycosylation" value="13 sites, No reported glycans"/>
</dbReference>
<dbReference type="GlyGen" id="Q5I2M5">
    <property type="glycosylation" value="15 sites"/>
</dbReference>
<dbReference type="PaxDb" id="9913-ENSBTAP00000024223"/>
<dbReference type="eggNOG" id="KOG4641">
    <property type="taxonomic scope" value="Eukaryota"/>
</dbReference>
<dbReference type="InParanoid" id="Q5I2M5"/>
<dbReference type="OrthoDB" id="10006997at2759"/>
<dbReference type="EvolutionaryTrace" id="Q5I2M5"/>
<dbReference type="Proteomes" id="UP000009136">
    <property type="component" value="Unplaced"/>
</dbReference>
<dbReference type="GO" id="GO:0032009">
    <property type="term" value="C:early phagosome"/>
    <property type="evidence" value="ECO:0000250"/>
    <property type="project" value="UniProtKB"/>
</dbReference>
<dbReference type="GO" id="GO:0036019">
    <property type="term" value="C:endolysosome"/>
    <property type="evidence" value="ECO:0000250"/>
    <property type="project" value="UniProtKB"/>
</dbReference>
<dbReference type="GO" id="GO:0005783">
    <property type="term" value="C:endoplasmic reticulum"/>
    <property type="evidence" value="ECO:0000250"/>
    <property type="project" value="UniProtKB"/>
</dbReference>
<dbReference type="GO" id="GO:0005789">
    <property type="term" value="C:endoplasmic reticulum membrane"/>
    <property type="evidence" value="ECO:0007669"/>
    <property type="project" value="UniProtKB-SubCell"/>
</dbReference>
<dbReference type="GO" id="GO:0005768">
    <property type="term" value="C:endosome"/>
    <property type="evidence" value="ECO:0000250"/>
    <property type="project" value="UniProtKB"/>
</dbReference>
<dbReference type="GO" id="GO:0005764">
    <property type="term" value="C:lysosome"/>
    <property type="evidence" value="ECO:0000250"/>
    <property type="project" value="UniProtKB"/>
</dbReference>
<dbReference type="GO" id="GO:0005886">
    <property type="term" value="C:plasma membrane"/>
    <property type="evidence" value="ECO:0000318"/>
    <property type="project" value="GO_Central"/>
</dbReference>
<dbReference type="GO" id="GO:0038187">
    <property type="term" value="F:pattern recognition receptor activity"/>
    <property type="evidence" value="ECO:0000314"/>
    <property type="project" value="UniProtKB"/>
</dbReference>
<dbReference type="GO" id="GO:0042803">
    <property type="term" value="F:protein homodimerization activity"/>
    <property type="evidence" value="ECO:0000250"/>
    <property type="project" value="UniProtKB"/>
</dbReference>
<dbReference type="GO" id="GO:0035197">
    <property type="term" value="F:siRNA binding"/>
    <property type="evidence" value="ECO:0000250"/>
    <property type="project" value="UniProtKB"/>
</dbReference>
<dbReference type="GO" id="GO:0045322">
    <property type="term" value="F:unmethylated CpG binding"/>
    <property type="evidence" value="ECO:0000314"/>
    <property type="project" value="UniProtKB"/>
</dbReference>
<dbReference type="GO" id="GO:0002218">
    <property type="term" value="P:activation of innate immune response"/>
    <property type="evidence" value="ECO:0000314"/>
    <property type="project" value="UniProtKB"/>
</dbReference>
<dbReference type="GO" id="GO:0007249">
    <property type="term" value="P:canonical NF-kappaB signal transduction"/>
    <property type="evidence" value="ECO:0000318"/>
    <property type="project" value="GO_Central"/>
</dbReference>
<dbReference type="GO" id="GO:0051607">
    <property type="term" value="P:defense response to virus"/>
    <property type="evidence" value="ECO:0000318"/>
    <property type="project" value="GO_Central"/>
</dbReference>
<dbReference type="GO" id="GO:0006954">
    <property type="term" value="P:inflammatory response"/>
    <property type="evidence" value="ECO:0007669"/>
    <property type="project" value="UniProtKB-KW"/>
</dbReference>
<dbReference type="GO" id="GO:0045087">
    <property type="term" value="P:innate immune response"/>
    <property type="evidence" value="ECO:0007669"/>
    <property type="project" value="UniProtKB-KW"/>
</dbReference>
<dbReference type="GO" id="GO:0050871">
    <property type="term" value="P:positive regulation of B cell activation"/>
    <property type="evidence" value="ECO:0000250"/>
    <property type="project" value="UniProtKB"/>
</dbReference>
<dbReference type="GO" id="GO:0030890">
    <property type="term" value="P:positive regulation of B cell proliferation"/>
    <property type="evidence" value="ECO:0000250"/>
    <property type="project" value="UniProtKB"/>
</dbReference>
<dbReference type="GO" id="GO:0002639">
    <property type="term" value="P:positive regulation of immunoglobulin production"/>
    <property type="evidence" value="ECO:0000250"/>
    <property type="project" value="UniProtKB"/>
</dbReference>
<dbReference type="GO" id="GO:0032727">
    <property type="term" value="P:positive regulation of interferon-alpha production"/>
    <property type="evidence" value="ECO:0000250"/>
    <property type="project" value="UniProtKB"/>
</dbReference>
<dbReference type="GO" id="GO:0032728">
    <property type="term" value="P:positive regulation of interferon-beta production"/>
    <property type="evidence" value="ECO:0000250"/>
    <property type="project" value="UniProtKB"/>
</dbReference>
<dbReference type="GO" id="GO:0032755">
    <property type="term" value="P:positive regulation of interleukin-6 production"/>
    <property type="evidence" value="ECO:0000318"/>
    <property type="project" value="GO_Central"/>
</dbReference>
<dbReference type="GO" id="GO:0043410">
    <property type="term" value="P:positive regulation of MAPK cascade"/>
    <property type="evidence" value="ECO:0000250"/>
    <property type="project" value="UniProtKB"/>
</dbReference>
<dbReference type="GO" id="GO:0034165">
    <property type="term" value="P:positive regulation of toll-like receptor 9 signaling pathway"/>
    <property type="evidence" value="ECO:0000314"/>
    <property type="project" value="UniProtKB"/>
</dbReference>
<dbReference type="GO" id="GO:0032729">
    <property type="term" value="P:positive regulation of type II interferon production"/>
    <property type="evidence" value="ECO:0000250"/>
    <property type="project" value="UniProtKB"/>
</dbReference>
<dbReference type="GO" id="GO:0045577">
    <property type="term" value="P:regulation of B cell differentiation"/>
    <property type="evidence" value="ECO:0000250"/>
    <property type="project" value="UniProtKB"/>
</dbReference>
<dbReference type="GO" id="GO:0002224">
    <property type="term" value="P:toll-like receptor signaling pathway"/>
    <property type="evidence" value="ECO:0000318"/>
    <property type="project" value="GO_Central"/>
</dbReference>
<dbReference type="FunFam" id="3.40.50.10140:FF:000003">
    <property type="entry name" value="Toll-like receptor 7"/>
    <property type="match status" value="1"/>
</dbReference>
<dbReference type="FunFam" id="3.80.10.10:FF:000037">
    <property type="entry name" value="Toll-like receptor 7"/>
    <property type="match status" value="1"/>
</dbReference>
<dbReference type="Gene3D" id="3.80.10.10">
    <property type="entry name" value="Ribonuclease Inhibitor"/>
    <property type="match status" value="1"/>
</dbReference>
<dbReference type="Gene3D" id="3.40.50.10140">
    <property type="entry name" value="Toll/interleukin-1 receptor homology (TIR) domain"/>
    <property type="match status" value="1"/>
</dbReference>
<dbReference type="InterPro" id="IPR001611">
    <property type="entry name" value="Leu-rich_rpt"/>
</dbReference>
<dbReference type="InterPro" id="IPR003591">
    <property type="entry name" value="Leu-rich_rpt_typical-subtyp"/>
</dbReference>
<dbReference type="InterPro" id="IPR041283">
    <property type="entry name" value="LRR_12"/>
</dbReference>
<dbReference type="InterPro" id="IPR032675">
    <property type="entry name" value="LRR_dom_sf"/>
</dbReference>
<dbReference type="InterPro" id="IPR000157">
    <property type="entry name" value="TIR_dom"/>
</dbReference>
<dbReference type="InterPro" id="IPR035897">
    <property type="entry name" value="Toll_tir_struct_dom_sf"/>
</dbReference>
<dbReference type="PANTHER" id="PTHR47410">
    <property type="entry name" value="TOLL-LIKE RECEPTOR 7-RELATED"/>
    <property type="match status" value="1"/>
</dbReference>
<dbReference type="PANTHER" id="PTHR47410:SF3">
    <property type="entry name" value="TOLL-LIKE RECEPTOR 9"/>
    <property type="match status" value="1"/>
</dbReference>
<dbReference type="Pfam" id="PF00560">
    <property type="entry name" value="LRR_1"/>
    <property type="match status" value="1"/>
</dbReference>
<dbReference type="Pfam" id="PF18837">
    <property type="entry name" value="LRR_12"/>
    <property type="match status" value="1"/>
</dbReference>
<dbReference type="Pfam" id="PF13855">
    <property type="entry name" value="LRR_8"/>
    <property type="match status" value="4"/>
</dbReference>
<dbReference type="PRINTS" id="PR00019">
    <property type="entry name" value="LEURICHRPT"/>
</dbReference>
<dbReference type="SMART" id="SM00364">
    <property type="entry name" value="LRR_BAC"/>
    <property type="match status" value="4"/>
</dbReference>
<dbReference type="SMART" id="SM00365">
    <property type="entry name" value="LRR_SD22"/>
    <property type="match status" value="5"/>
</dbReference>
<dbReference type="SMART" id="SM00369">
    <property type="entry name" value="LRR_TYP"/>
    <property type="match status" value="17"/>
</dbReference>
<dbReference type="SUPFAM" id="SSF52058">
    <property type="entry name" value="L domain-like"/>
    <property type="match status" value="2"/>
</dbReference>
<dbReference type="SUPFAM" id="SSF52200">
    <property type="entry name" value="Toll/Interleukin receptor TIR domain"/>
    <property type="match status" value="1"/>
</dbReference>
<dbReference type="PROSITE" id="PS51450">
    <property type="entry name" value="LRR"/>
    <property type="match status" value="18"/>
</dbReference>
<dbReference type="PROSITE" id="PS50104">
    <property type="entry name" value="TIR"/>
    <property type="match status" value="1"/>
</dbReference>
<feature type="signal peptide" evidence="4">
    <location>
        <begin position="1"/>
        <end position="24"/>
    </location>
</feature>
<feature type="chain" id="PRO_0000227006" description="Toll-like receptor 9">
    <location>
        <begin position="25"/>
        <end position="1029"/>
    </location>
</feature>
<feature type="topological domain" description="Extracellular" evidence="4">
    <location>
        <begin position="25"/>
        <end position="815"/>
    </location>
</feature>
<feature type="transmembrane region" description="Helical" evidence="4">
    <location>
        <begin position="816"/>
        <end position="836"/>
    </location>
</feature>
<feature type="topological domain" description="Cytoplasmic" evidence="4">
    <location>
        <begin position="837"/>
        <end position="1029"/>
    </location>
</feature>
<feature type="repeat" description="LRR 1">
    <location>
        <begin position="61"/>
        <end position="84"/>
    </location>
</feature>
<feature type="repeat" description="LRR 2">
    <location>
        <begin position="86"/>
        <end position="109"/>
    </location>
</feature>
<feature type="repeat" description="LRR 3">
    <location>
        <begin position="121"/>
        <end position="146"/>
    </location>
</feature>
<feature type="repeat" description="LRR 4">
    <location>
        <begin position="149"/>
        <end position="165"/>
    </location>
</feature>
<feature type="repeat" description="LRR 5">
    <location>
        <begin position="166"/>
        <end position="189"/>
    </location>
</feature>
<feature type="repeat" description="LRR 6">
    <location>
        <begin position="197"/>
        <end position="220"/>
    </location>
</feature>
<feature type="repeat" description="LRR 7">
    <location>
        <begin position="222"/>
        <end position="241"/>
    </location>
</feature>
<feature type="repeat" description="LRR 8">
    <location>
        <begin position="242"/>
        <end position="267"/>
    </location>
</feature>
<feature type="repeat" description="LRR 9">
    <location>
        <begin position="282"/>
        <end position="305"/>
    </location>
</feature>
<feature type="repeat" description="LRR 10">
    <location>
        <begin position="307"/>
        <end position="331"/>
    </location>
</feature>
<feature type="repeat" description="LRR 11">
    <location>
        <begin position="332"/>
        <end position="355"/>
    </location>
</feature>
<feature type="repeat" description="LRR 12">
    <location>
        <begin position="362"/>
        <end position="385"/>
    </location>
</feature>
<feature type="repeat" description="LRR 13">
    <location>
        <begin position="389"/>
        <end position="412"/>
    </location>
</feature>
<feature type="repeat" description="LRR 14">
    <location>
        <begin position="414"/>
        <end position="439"/>
    </location>
</feature>
<feature type="repeat" description="LRR 15">
    <location>
        <begin position="469"/>
        <end position="492"/>
    </location>
</feature>
<feature type="repeat" description="LRR 16">
    <location>
        <begin position="494"/>
        <end position="517"/>
    </location>
</feature>
<feature type="repeat" description="LRR 17">
    <location>
        <begin position="518"/>
        <end position="541"/>
    </location>
</feature>
<feature type="repeat" description="LRR 18">
    <location>
        <begin position="543"/>
        <end position="570"/>
    </location>
</feature>
<feature type="repeat" description="LRR 19">
    <location>
        <begin position="572"/>
        <end position="596"/>
    </location>
</feature>
<feature type="repeat" description="LRR 20">
    <location>
        <begin position="598"/>
        <end position="620"/>
    </location>
</feature>
<feature type="repeat" description="LRR 21">
    <location>
        <begin position="625"/>
        <end position="648"/>
    </location>
</feature>
<feature type="repeat" description="LRR 22">
    <location>
        <begin position="650"/>
        <end position="673"/>
    </location>
</feature>
<feature type="repeat" description="LRR 23">
    <location>
        <begin position="674"/>
        <end position="697"/>
    </location>
</feature>
<feature type="repeat" description="LRR 24">
    <location>
        <begin position="699"/>
        <end position="721"/>
    </location>
</feature>
<feature type="repeat" description="LRR 25">
    <location>
        <begin position="722"/>
        <end position="745"/>
    </location>
</feature>
<feature type="repeat" description="LRR 26">
    <location>
        <begin position="747"/>
        <end position="770"/>
    </location>
</feature>
<feature type="domain" description="TIR" evidence="5">
    <location>
        <begin position="864"/>
        <end position="1009"/>
    </location>
</feature>
<feature type="binding site" evidence="6 8">
    <location>
        <begin position="46"/>
        <end position="50"/>
    </location>
    <ligand>
        <name>DNA</name>
        <dbReference type="ChEBI" id="CHEBI:16991"/>
        <note>CpG-containing DNA</note>
    </ligand>
</feature>
<feature type="binding site" evidence="6 8">
    <location>
        <begin position="71"/>
        <end position="76"/>
    </location>
    <ligand>
        <name>DNA</name>
        <dbReference type="ChEBI" id="CHEBI:16991"/>
        <note>CpG-containing DNA</note>
    </ligand>
</feature>
<feature type="binding site" evidence="6 8">
    <location>
        <begin position="94"/>
        <end position="108"/>
    </location>
    <ligand>
        <name>DNA</name>
        <dbReference type="ChEBI" id="CHEBI:16991"/>
        <note>CpG-containing DNA</note>
    </ligand>
</feature>
<feature type="binding site" evidence="1">
    <location>
        <position position="131"/>
    </location>
    <ligand>
        <name>DNA</name>
        <dbReference type="ChEBI" id="CHEBI:16991"/>
        <note>CpG-containing DNA</note>
    </ligand>
</feature>
<feature type="binding site" evidence="1">
    <location>
        <begin position="178"/>
        <end position="180"/>
    </location>
    <ligand>
        <name>DNA</name>
        <dbReference type="ChEBI" id="CHEBI:16991"/>
        <note>CpG-containing DNA</note>
    </ligand>
</feature>
<feature type="binding site" evidence="1">
    <location>
        <position position="207"/>
    </location>
    <ligand>
        <name>DNA</name>
        <dbReference type="ChEBI" id="CHEBI:16991"/>
        <note>CpG-containing DNA</note>
    </ligand>
</feature>
<feature type="binding site" evidence="1">
    <location>
        <position position="261"/>
    </location>
    <ligand>
        <name>DNA</name>
        <dbReference type="ChEBI" id="CHEBI:16991"/>
        <note>CpG-containing DNA</note>
    </ligand>
</feature>
<feature type="lipid moiety-binding region" description="S-palmitoyl cysteine" evidence="3">
    <location>
        <position position="257"/>
    </location>
</feature>
<feature type="lipid moiety-binding region" description="S-palmitoyl cysteine" evidence="3">
    <location>
        <position position="264"/>
    </location>
</feature>
<feature type="glycosylation site" description="N-linked (GlcNAc...) asparagine" evidence="4">
    <location>
        <position position="63"/>
    </location>
</feature>
<feature type="glycosylation site" description="N-linked (GlcNAc...) asparagine" evidence="4">
    <location>
        <position position="128"/>
    </location>
</feature>
<feature type="glycosylation site" description="N-linked (GlcNAc...) asparagine" evidence="4">
    <location>
        <position position="199"/>
    </location>
</feature>
<feature type="glycosylation site" description="N-linked (GlcNAc...) asparagine" evidence="4">
    <location>
        <position position="209"/>
    </location>
</feature>
<feature type="glycosylation site" description="N-linked (GlcNAc...) asparagine" evidence="4">
    <location>
        <position position="241"/>
    </location>
</feature>
<feature type="glycosylation site" description="N-linked (GlcNAc...) asparagine" evidence="4">
    <location>
        <position position="339"/>
    </location>
</feature>
<feature type="glycosylation site" description="N-linked (GlcNAc...) asparagine" evidence="4">
    <location>
        <position position="380"/>
    </location>
</feature>
<feature type="glycosylation site" description="N-linked (GlcNAc...) asparagine" evidence="4">
    <location>
        <position position="472"/>
    </location>
</feature>
<feature type="glycosylation site" description="N-linked (GlcNAc...) asparagine" evidence="4">
    <location>
        <position position="511"/>
    </location>
</feature>
<feature type="glycosylation site" description="N-linked (GlcNAc...) asparagine" evidence="4">
    <location>
        <position position="565"/>
    </location>
</feature>
<feature type="glycosylation site" description="N-linked (GlcNAc...) asparagine" evidence="4">
    <location>
        <position position="667"/>
    </location>
</feature>
<feature type="glycosylation site" description="N-linked (GlcNAc...) asparagine" evidence="4">
    <location>
        <position position="692"/>
    </location>
</feature>
<feature type="glycosylation site" description="N-linked (GlcNAc...) asparagine" evidence="4">
    <location>
        <position position="729"/>
    </location>
</feature>
<feature type="disulfide bond" evidence="6 8">
    <location>
        <begin position="34"/>
        <end position="44"/>
    </location>
</feature>
<feature type="disulfide bond" evidence="6 8">
    <location>
        <begin position="97"/>
        <end position="109"/>
    </location>
</feature>
<feature type="disulfide bond" evidence="6 8">
    <location>
        <begin position="177"/>
        <end position="183"/>
    </location>
</feature>
<feature type="disulfide bond" evidence="6 8">
    <location>
        <begin position="254"/>
        <end position="267"/>
    </location>
</feature>
<feature type="disulfide bond" evidence="6 8">
    <location>
        <begin position="257"/>
        <end position="264"/>
    </location>
</feature>
<feature type="disulfide bond" evidence="6 8">
    <location>
        <begin position="469"/>
        <end position="498"/>
    </location>
</feature>
<feature type="disulfide bond" evidence="6 8">
    <location>
        <begin position="762"/>
        <end position="788"/>
    </location>
</feature>
<feature type="disulfide bond" evidence="1">
    <location>
        <begin position="764"/>
        <end position="807"/>
    </location>
</feature>
<feature type="turn" evidence="9">
    <location>
        <begin position="30"/>
        <end position="33"/>
    </location>
</feature>
<feature type="strand" evidence="9">
    <location>
        <begin position="34"/>
        <end position="36"/>
    </location>
</feature>
<feature type="helix" evidence="10">
    <location>
        <begin position="38"/>
        <end position="40"/>
    </location>
</feature>
<feature type="strand" evidence="9">
    <location>
        <begin position="41"/>
        <end position="43"/>
    </location>
</feature>
<feature type="helix" evidence="9">
    <location>
        <begin position="61"/>
        <end position="63"/>
    </location>
</feature>
<feature type="strand" evidence="9">
    <location>
        <begin position="66"/>
        <end position="68"/>
    </location>
</feature>
<feature type="strand" evidence="9">
    <location>
        <begin position="90"/>
        <end position="92"/>
    </location>
</feature>
<feature type="turn" evidence="9">
    <location>
        <begin position="100"/>
        <end position="102"/>
    </location>
</feature>
<feature type="turn" evidence="9">
    <location>
        <begin position="115"/>
        <end position="120"/>
    </location>
</feature>
<feature type="strand" evidence="9">
    <location>
        <begin position="126"/>
        <end position="128"/>
    </location>
</feature>
<feature type="strand" evidence="9">
    <location>
        <begin position="146"/>
        <end position="148"/>
    </location>
</feature>
<feature type="helix" evidence="9">
    <location>
        <begin position="160"/>
        <end position="162"/>
    </location>
</feature>
<feature type="strand" evidence="9">
    <location>
        <begin position="170"/>
        <end position="172"/>
    </location>
</feature>
<feature type="strand" evidence="9">
    <location>
        <begin position="176"/>
        <end position="178"/>
    </location>
</feature>
<feature type="turn" evidence="9">
    <location>
        <begin position="191"/>
        <end position="196"/>
    </location>
</feature>
<feature type="strand" evidence="9">
    <location>
        <begin position="202"/>
        <end position="204"/>
    </location>
</feature>
<feature type="strand" evidence="9">
    <location>
        <begin position="222"/>
        <end position="225"/>
    </location>
</feature>
<feature type="helix" evidence="9">
    <location>
        <begin position="236"/>
        <end position="239"/>
    </location>
</feature>
<feature type="strand" evidence="9">
    <location>
        <begin position="246"/>
        <end position="249"/>
    </location>
</feature>
<feature type="strand" evidence="10">
    <location>
        <begin position="252"/>
        <end position="255"/>
    </location>
</feature>
<feature type="helix" evidence="9">
    <location>
        <begin position="276"/>
        <end position="279"/>
    </location>
</feature>
<feature type="strand" evidence="9">
    <location>
        <begin position="287"/>
        <end position="289"/>
    </location>
</feature>
<feature type="helix" evidence="9">
    <location>
        <begin position="300"/>
        <end position="303"/>
    </location>
</feature>
<feature type="strand" evidence="9">
    <location>
        <begin position="311"/>
        <end position="313"/>
    </location>
</feature>
<feature type="turn" evidence="9">
    <location>
        <begin position="319"/>
        <end position="321"/>
    </location>
</feature>
<feature type="helix" evidence="9">
    <location>
        <begin position="322"/>
        <end position="325"/>
    </location>
</feature>
<feature type="turn" evidence="9">
    <location>
        <begin position="328"/>
        <end position="331"/>
    </location>
</feature>
<feature type="strand" evidence="9">
    <location>
        <begin position="337"/>
        <end position="339"/>
    </location>
</feature>
<feature type="helix" evidence="9">
    <location>
        <begin position="357"/>
        <end position="360"/>
    </location>
</feature>
<feature type="strand" evidence="9">
    <location>
        <begin position="367"/>
        <end position="369"/>
    </location>
</feature>
<feature type="strand" evidence="9">
    <location>
        <begin position="375"/>
        <end position="378"/>
    </location>
</feature>
<feature type="turn" evidence="9">
    <location>
        <begin position="380"/>
        <end position="383"/>
    </location>
</feature>
<feature type="helix" evidence="9">
    <location>
        <begin position="384"/>
        <end position="388"/>
    </location>
</feature>
<feature type="strand" evidence="9">
    <location>
        <begin position="394"/>
        <end position="396"/>
    </location>
</feature>
<feature type="strand" evidence="9">
    <location>
        <begin position="403"/>
        <end position="405"/>
    </location>
</feature>
<feature type="helix" evidence="9">
    <location>
        <begin position="407"/>
        <end position="412"/>
    </location>
</feature>
<feature type="strand" evidence="9">
    <location>
        <begin position="418"/>
        <end position="420"/>
    </location>
</feature>
<feature type="strand" evidence="9">
    <location>
        <begin position="474"/>
        <end position="476"/>
    </location>
</feature>
<feature type="helix" evidence="9">
    <location>
        <begin position="487"/>
        <end position="490"/>
    </location>
</feature>
<feature type="strand" evidence="9">
    <location>
        <begin position="498"/>
        <end position="500"/>
    </location>
</feature>
<feature type="strand" evidence="10">
    <location>
        <begin position="512"/>
        <end position="515"/>
    </location>
</feature>
<feature type="strand" evidence="9">
    <location>
        <begin position="523"/>
        <end position="525"/>
    </location>
</feature>
<feature type="turn" evidence="9">
    <location>
        <begin position="536"/>
        <end position="541"/>
    </location>
</feature>
<feature type="strand" evidence="9">
    <location>
        <begin position="547"/>
        <end position="549"/>
    </location>
</feature>
<feature type="helix" evidence="9">
    <location>
        <begin position="554"/>
        <end position="557"/>
    </location>
</feature>
<feature type="helix" evidence="9">
    <location>
        <begin position="567"/>
        <end position="571"/>
    </location>
</feature>
<feature type="strand" evidence="9">
    <location>
        <begin position="577"/>
        <end position="579"/>
    </location>
</feature>
<feature type="strand" evidence="9">
    <location>
        <begin position="587"/>
        <end position="589"/>
    </location>
</feature>
<feature type="strand" evidence="9">
    <location>
        <begin position="595"/>
        <end position="597"/>
    </location>
</feature>
<feature type="strand" evidence="9">
    <location>
        <begin position="600"/>
        <end position="602"/>
    </location>
</feature>
<feature type="helix" evidence="9">
    <location>
        <begin position="608"/>
        <end position="611"/>
    </location>
</feature>
<feature type="turn" evidence="9">
    <location>
        <begin position="615"/>
        <end position="624"/>
    </location>
</feature>
<feature type="strand" evidence="9">
    <location>
        <begin position="630"/>
        <end position="632"/>
    </location>
</feature>
<feature type="helix" evidence="9">
    <location>
        <begin position="643"/>
        <end position="647"/>
    </location>
</feature>
<feature type="strand" evidence="9">
    <location>
        <begin position="654"/>
        <end position="657"/>
    </location>
</feature>
<feature type="helix" evidence="9">
    <location>
        <begin position="669"/>
        <end position="673"/>
    </location>
</feature>
<feature type="strand" evidence="9">
    <location>
        <begin position="679"/>
        <end position="681"/>
    </location>
</feature>
<feature type="strand" evidence="9">
    <location>
        <begin position="703"/>
        <end position="705"/>
    </location>
</feature>
<feature type="strand" evidence="9">
    <location>
        <begin position="727"/>
        <end position="729"/>
    </location>
</feature>
<feature type="helix" evidence="9">
    <location>
        <begin position="740"/>
        <end position="742"/>
    </location>
</feature>
<feature type="turn" evidence="10">
    <location>
        <begin position="743"/>
        <end position="745"/>
    </location>
</feature>
<feature type="helix" evidence="10">
    <location>
        <begin position="746"/>
        <end position="749"/>
    </location>
</feature>
<feature type="strand" evidence="9">
    <location>
        <begin position="752"/>
        <end position="754"/>
    </location>
</feature>
<feature type="helix" evidence="9">
    <location>
        <begin position="768"/>
        <end position="774"/>
    </location>
</feature>
<feature type="turn" evidence="9">
    <location>
        <begin position="775"/>
        <end position="778"/>
    </location>
</feature>
<feature type="turn" evidence="10">
    <location>
        <begin position="780"/>
        <end position="785"/>
    </location>
</feature>
<feature type="strand" evidence="9">
    <location>
        <begin position="788"/>
        <end position="790"/>
    </location>
</feature>
<reference key="1">
    <citation type="journal article" date="2005" name="Vet. Immunol. Immunopathol.">
        <title>Bovine toll-like receptor 9: a comparative analysis of molecular structure, function and expression.</title>
        <authorList>
            <person name="Griebel P.J."/>
            <person name="Brownlie R."/>
            <person name="Manuja A."/>
            <person name="Nichani A."/>
            <person name="Mookherjee N."/>
            <person name="Popowych Y."/>
            <person name="Mutwiri G."/>
            <person name="Hecker R."/>
            <person name="Babiuk L.A."/>
        </authorList>
    </citation>
    <scope>NUCLEOTIDE SEQUENCE [MRNA]</scope>
    <source>
        <tissue>Spleen</tissue>
    </source>
</reference>
<reference key="2">
    <citation type="journal article" date="2015" name="Nature">
        <title>Structural basis of CpG and inhibitory DNA recognition by Toll-like receptor 9.</title>
        <authorList>
            <person name="Ohto U."/>
            <person name="Shibata T."/>
            <person name="Tanji H."/>
            <person name="Ishida H."/>
            <person name="Krayukhina E."/>
            <person name="Uchiyama S."/>
            <person name="Miyake K."/>
            <person name="Shimizu T."/>
        </authorList>
    </citation>
    <scope>X-RAY CRYSTALLOGRAPHY (2.38 ANGSTROMS) OF 25-815 IN COMPLEX WITH AGONIST CPG-DNA</scope>
    <scope>FUNCTION</scope>
    <scope>DISULFIDE BONDS</scope>
</reference>
<proteinExistence type="evidence at protein level"/>
<organism>
    <name type="scientific">Bos taurus</name>
    <name type="common">Bovine</name>
    <dbReference type="NCBI Taxonomy" id="9913"/>
    <lineage>
        <taxon>Eukaryota</taxon>
        <taxon>Metazoa</taxon>
        <taxon>Chordata</taxon>
        <taxon>Craniata</taxon>
        <taxon>Vertebrata</taxon>
        <taxon>Euteleostomi</taxon>
        <taxon>Mammalia</taxon>
        <taxon>Eutheria</taxon>
        <taxon>Laurasiatheria</taxon>
        <taxon>Artiodactyla</taxon>
        <taxon>Ruminantia</taxon>
        <taxon>Pecora</taxon>
        <taxon>Bovidae</taxon>
        <taxon>Bovinae</taxon>
        <taxon>Bos</taxon>
    </lineage>
</organism>
<evidence type="ECO:0000250" key="1">
    <source>
        <dbReference type="UniProtKB" id="Q2EEY0"/>
    </source>
</evidence>
<evidence type="ECO:0000250" key="2">
    <source>
        <dbReference type="UniProtKB" id="Q9EQU3"/>
    </source>
</evidence>
<evidence type="ECO:0000250" key="3">
    <source>
        <dbReference type="UniProtKB" id="Q9NR96"/>
    </source>
</evidence>
<evidence type="ECO:0000255" key="4"/>
<evidence type="ECO:0000255" key="5">
    <source>
        <dbReference type="PROSITE-ProRule" id="PRU00204"/>
    </source>
</evidence>
<evidence type="ECO:0000269" key="6">
    <source>
    </source>
</evidence>
<evidence type="ECO:0000305" key="7"/>
<evidence type="ECO:0007744" key="8">
    <source>
        <dbReference type="PDB" id="3WPE"/>
    </source>
</evidence>
<evidence type="ECO:0007829" key="9">
    <source>
        <dbReference type="PDB" id="3WPE"/>
    </source>
</evidence>
<evidence type="ECO:0007829" key="10">
    <source>
        <dbReference type="PDB" id="5Y3M"/>
    </source>
</evidence>
<keyword id="KW-0002">3D-structure</keyword>
<keyword id="KW-0968">Cytoplasmic vesicle</keyword>
<keyword id="KW-1015">Disulfide bond</keyword>
<keyword id="KW-0256">Endoplasmic reticulum</keyword>
<keyword id="KW-0967">Endosome</keyword>
<keyword id="KW-0325">Glycoprotein</keyword>
<keyword id="KW-0391">Immunity</keyword>
<keyword id="KW-0395">Inflammatory response</keyword>
<keyword id="KW-0399">Innate immunity</keyword>
<keyword id="KW-0433">Leucine-rich repeat</keyword>
<keyword id="KW-0449">Lipoprotein</keyword>
<keyword id="KW-0458">Lysosome</keyword>
<keyword id="KW-0472">Membrane</keyword>
<keyword id="KW-0564">Palmitate</keyword>
<keyword id="KW-0675">Receptor</keyword>
<keyword id="KW-1185">Reference proteome</keyword>
<keyword id="KW-0677">Repeat</keyword>
<keyword id="KW-0732">Signal</keyword>
<keyword id="KW-0812">Transmembrane</keyword>
<keyword id="KW-1133">Transmembrane helix</keyword>